<proteinExistence type="inferred from homology"/>
<dbReference type="EC" id="1.8.4.11" evidence="1"/>
<dbReference type="EMBL" id="AM180088">
    <property type="protein sequence ID" value="CAJ51971.1"/>
    <property type="molecule type" value="Genomic_DNA"/>
</dbReference>
<dbReference type="RefSeq" id="WP_011571119.1">
    <property type="nucleotide sequence ID" value="NC_008212.1"/>
</dbReference>
<dbReference type="SMR" id="Q18J40"/>
<dbReference type="STRING" id="362976.HQ_1843A"/>
<dbReference type="GeneID" id="4194306"/>
<dbReference type="KEGG" id="hwa:HQ_1843A"/>
<dbReference type="eggNOG" id="arCOG02816">
    <property type="taxonomic scope" value="Archaea"/>
</dbReference>
<dbReference type="HOGENOM" id="CLU_031040_10_0_2"/>
<dbReference type="Proteomes" id="UP000001975">
    <property type="component" value="Chromosome"/>
</dbReference>
<dbReference type="GO" id="GO:0033744">
    <property type="term" value="F:L-methionine:thioredoxin-disulfide S-oxidoreductase activity"/>
    <property type="evidence" value="ECO:0007669"/>
    <property type="project" value="RHEA"/>
</dbReference>
<dbReference type="GO" id="GO:0008113">
    <property type="term" value="F:peptide-methionine (S)-S-oxide reductase activity"/>
    <property type="evidence" value="ECO:0007669"/>
    <property type="project" value="UniProtKB-UniRule"/>
</dbReference>
<dbReference type="GO" id="GO:0036211">
    <property type="term" value="P:protein modification process"/>
    <property type="evidence" value="ECO:0007669"/>
    <property type="project" value="UniProtKB-UniRule"/>
</dbReference>
<dbReference type="Gene3D" id="3.30.1060.10">
    <property type="entry name" value="Peptide methionine sulphoxide reductase MsrA"/>
    <property type="match status" value="1"/>
</dbReference>
<dbReference type="HAMAP" id="MF_01401">
    <property type="entry name" value="MsrA"/>
    <property type="match status" value="1"/>
</dbReference>
<dbReference type="InterPro" id="IPR002569">
    <property type="entry name" value="Met_Sox_Rdtase_MsrA_dom"/>
</dbReference>
<dbReference type="InterPro" id="IPR036509">
    <property type="entry name" value="Met_Sox_Rdtase_MsrA_sf"/>
</dbReference>
<dbReference type="NCBIfam" id="TIGR00401">
    <property type="entry name" value="msrA"/>
    <property type="match status" value="1"/>
</dbReference>
<dbReference type="PANTHER" id="PTHR43774">
    <property type="entry name" value="PEPTIDE METHIONINE SULFOXIDE REDUCTASE"/>
    <property type="match status" value="1"/>
</dbReference>
<dbReference type="PANTHER" id="PTHR43774:SF1">
    <property type="entry name" value="PEPTIDE METHIONINE SULFOXIDE REDUCTASE MSRA 2"/>
    <property type="match status" value="1"/>
</dbReference>
<dbReference type="Pfam" id="PF01625">
    <property type="entry name" value="PMSR"/>
    <property type="match status" value="1"/>
</dbReference>
<dbReference type="SUPFAM" id="SSF55068">
    <property type="entry name" value="Peptide methionine sulfoxide reductase"/>
    <property type="match status" value="1"/>
</dbReference>
<accession>Q18J40</accession>
<comment type="function">
    <text evidence="1">Has an important function as a repair enzyme for proteins that have been inactivated by oxidation. Catalyzes the reversible oxidation-reduction of methionine sulfoxide in proteins to methionine.</text>
</comment>
<comment type="catalytic activity">
    <reaction evidence="1">
        <text>L-methionyl-[protein] + [thioredoxin]-disulfide + H2O = L-methionyl-(S)-S-oxide-[protein] + [thioredoxin]-dithiol</text>
        <dbReference type="Rhea" id="RHEA:14217"/>
        <dbReference type="Rhea" id="RHEA-COMP:10698"/>
        <dbReference type="Rhea" id="RHEA-COMP:10700"/>
        <dbReference type="Rhea" id="RHEA-COMP:12313"/>
        <dbReference type="Rhea" id="RHEA-COMP:12315"/>
        <dbReference type="ChEBI" id="CHEBI:15377"/>
        <dbReference type="ChEBI" id="CHEBI:16044"/>
        <dbReference type="ChEBI" id="CHEBI:29950"/>
        <dbReference type="ChEBI" id="CHEBI:44120"/>
        <dbReference type="ChEBI" id="CHEBI:50058"/>
        <dbReference type="EC" id="1.8.4.11"/>
    </reaction>
</comment>
<comment type="catalytic activity">
    <reaction evidence="1">
        <text>[thioredoxin]-disulfide + L-methionine + H2O = L-methionine (S)-S-oxide + [thioredoxin]-dithiol</text>
        <dbReference type="Rhea" id="RHEA:19993"/>
        <dbReference type="Rhea" id="RHEA-COMP:10698"/>
        <dbReference type="Rhea" id="RHEA-COMP:10700"/>
        <dbReference type="ChEBI" id="CHEBI:15377"/>
        <dbReference type="ChEBI" id="CHEBI:29950"/>
        <dbReference type="ChEBI" id="CHEBI:50058"/>
        <dbReference type="ChEBI" id="CHEBI:57844"/>
        <dbReference type="ChEBI" id="CHEBI:58772"/>
        <dbReference type="EC" id="1.8.4.11"/>
    </reaction>
</comment>
<comment type="similarity">
    <text evidence="1">Belongs to the MsrA Met sulfoxide reductase family.</text>
</comment>
<protein>
    <recommendedName>
        <fullName evidence="1">Peptide methionine sulfoxide reductase MsrA</fullName>
        <shortName evidence="1">Protein-methionine-S-oxide reductase</shortName>
        <ecNumber evidence="1">1.8.4.11</ecNumber>
    </recommendedName>
    <alternativeName>
        <fullName evidence="1">Peptide-methionine (S)-S-oxide reductase</fullName>
        <shortName evidence="1">Peptide Met(O) reductase</shortName>
    </alternativeName>
</protein>
<organism>
    <name type="scientific">Haloquadratum walsbyi (strain DSM 16790 / HBSQ001)</name>
    <dbReference type="NCBI Taxonomy" id="362976"/>
    <lineage>
        <taxon>Archaea</taxon>
        <taxon>Methanobacteriati</taxon>
        <taxon>Methanobacteriota</taxon>
        <taxon>Stenosarchaea group</taxon>
        <taxon>Halobacteria</taxon>
        <taxon>Halobacteriales</taxon>
        <taxon>Haloferacaceae</taxon>
        <taxon>Haloquadratum</taxon>
    </lineage>
</organism>
<evidence type="ECO:0000255" key="1">
    <source>
        <dbReference type="HAMAP-Rule" id="MF_01401"/>
    </source>
</evidence>
<sequence length="174" mass="19622">MSETATVGGGCFWCTEAAMKELAGVNTVTSGYAGGDIDNPTYKQVCSGTTDHAEVVQIEYDPTKIEYSELLEVFFATHDPTQLNRQGPDVGTQYRSIILTHTAEQRATAEAYIEALNDHYDDAIVTEIESLERFWSAEEYHQDYFEKNPSDAYCRMHAQPKVEKVRETFTEKLT</sequence>
<name>MSRA_HALWD</name>
<feature type="chain" id="PRO_1000145411" description="Peptide methionine sulfoxide reductase MsrA">
    <location>
        <begin position="1"/>
        <end position="174"/>
    </location>
</feature>
<feature type="active site" evidence="1">
    <location>
        <position position="11"/>
    </location>
</feature>
<reference key="1">
    <citation type="journal article" date="2006" name="BMC Genomics">
        <title>The genome of the square archaeon Haloquadratum walsbyi: life at the limits of water activity.</title>
        <authorList>
            <person name="Bolhuis H."/>
            <person name="Palm P."/>
            <person name="Wende A."/>
            <person name="Falb M."/>
            <person name="Rampp M."/>
            <person name="Rodriguez-Valera F."/>
            <person name="Pfeiffer F."/>
            <person name="Oesterhelt D."/>
        </authorList>
    </citation>
    <scope>NUCLEOTIDE SEQUENCE [LARGE SCALE GENOMIC DNA]</scope>
    <source>
        <strain>DSM 16790 / HBSQ001</strain>
    </source>
</reference>
<keyword id="KW-0560">Oxidoreductase</keyword>
<keyword id="KW-1185">Reference proteome</keyword>
<gene>
    <name evidence="1" type="primary">msrA</name>
    <name type="ordered locus">HQ_1843A</name>
</gene>